<feature type="peptide" id="PRO_0000400719" description="U2-theraphotoxin-Hhn1a">
    <location>
        <begin position="1"/>
        <end position="31"/>
    </location>
</feature>
<feature type="disulfide bond" evidence="2">
    <location>
        <begin position="2"/>
        <end position="14"/>
    </location>
</feature>
<feature type="disulfide bond" evidence="2">
    <location>
        <begin position="7"/>
        <end position="19"/>
    </location>
</feature>
<feature type="disulfide bond" evidence="2">
    <location>
        <begin position="13"/>
        <end position="26"/>
    </location>
</feature>
<protein>
    <recommendedName>
        <fullName>U2-theraphotoxin-Hhn1a</fullName>
        <shortName>U2-TRTX-Hhn1a</shortName>
    </recommendedName>
    <alternativeName>
        <fullName>Hainantoxin F3-25.85</fullName>
    </alternativeName>
    <alternativeName>
        <fullName>Peptide F3-25.85</fullName>
    </alternativeName>
</protein>
<proteinExistence type="evidence at protein level"/>
<sequence length="31" mass="3360">GCLGDKCDYNNGCCSGYVCSRTWKWCVLAGP</sequence>
<evidence type="ECO:0000250" key="1"/>
<evidence type="ECO:0000250" key="2">
    <source>
        <dbReference type="UniProtKB" id="B3FIS6"/>
    </source>
</evidence>
<evidence type="ECO:0000250" key="3">
    <source>
        <dbReference type="UniProtKB" id="Q86C51"/>
    </source>
</evidence>
<evidence type="ECO:0000269" key="4">
    <source>
    </source>
</evidence>
<evidence type="ECO:0000305" key="5"/>
<comment type="function">
    <text evidence="3">Agglutinates erythrocytes.</text>
</comment>
<comment type="subcellular location">
    <subcellularLocation>
        <location>Secreted</location>
    </subcellularLocation>
</comment>
<comment type="tissue specificity">
    <text>Expressed by the venom gland.</text>
</comment>
<comment type="domain">
    <text evidence="1">The presence of a 'disulfide through disulfide knot' structurally defines this protein as a knottin.</text>
</comment>
<comment type="mass spectrometry" mass="3351.9" method="MALDI" evidence="4"/>
<comment type="similarity">
    <text evidence="5">Belongs to the neurotoxin 10 (Hwtx-1) family. 51 (Hntx-8) subfamily. Hntx-8 sub-subfamily.</text>
</comment>
<keyword id="KW-0903">Direct protein sequencing</keyword>
<keyword id="KW-1015">Disulfide bond</keyword>
<keyword id="KW-0872">Ion channel impairing toxin</keyword>
<keyword id="KW-0960">Knottin</keyword>
<keyword id="KW-0964">Secreted</keyword>
<keyword id="KW-0800">Toxin</keyword>
<name>TXLF3_CYRHA</name>
<organism>
    <name type="scientific">Cyriopagopus hainanus</name>
    <name type="common">Chinese bird spider</name>
    <name type="synonym">Haplopelma hainanum</name>
    <dbReference type="NCBI Taxonomy" id="209901"/>
    <lineage>
        <taxon>Eukaryota</taxon>
        <taxon>Metazoa</taxon>
        <taxon>Ecdysozoa</taxon>
        <taxon>Arthropoda</taxon>
        <taxon>Chelicerata</taxon>
        <taxon>Arachnida</taxon>
        <taxon>Araneae</taxon>
        <taxon>Mygalomorphae</taxon>
        <taxon>Theraphosidae</taxon>
        <taxon>Haplopelma</taxon>
    </lineage>
</organism>
<dbReference type="SMR" id="P0CH71"/>
<dbReference type="ArachnoServer" id="AS002058">
    <property type="toxin name" value="U2-theraphotoxin-Hhn1a"/>
</dbReference>
<dbReference type="GO" id="GO:0005576">
    <property type="term" value="C:extracellular region"/>
    <property type="evidence" value="ECO:0007669"/>
    <property type="project" value="UniProtKB-SubCell"/>
</dbReference>
<dbReference type="GO" id="GO:0008200">
    <property type="term" value="F:ion channel inhibitor activity"/>
    <property type="evidence" value="ECO:0007669"/>
    <property type="project" value="InterPro"/>
</dbReference>
<dbReference type="GO" id="GO:0090729">
    <property type="term" value="F:toxin activity"/>
    <property type="evidence" value="ECO:0007669"/>
    <property type="project" value="UniProtKB-KW"/>
</dbReference>
<dbReference type="InterPro" id="IPR011696">
    <property type="entry name" value="Huwentoxin-1"/>
</dbReference>
<dbReference type="InterPro" id="IPR013140">
    <property type="entry name" value="Huwentoxin_CS1"/>
</dbReference>
<dbReference type="Pfam" id="PF07740">
    <property type="entry name" value="Toxin_12"/>
    <property type="match status" value="1"/>
</dbReference>
<dbReference type="SUPFAM" id="SSF57059">
    <property type="entry name" value="omega toxin-like"/>
    <property type="match status" value="1"/>
</dbReference>
<dbReference type="PROSITE" id="PS60021">
    <property type="entry name" value="HWTX_1"/>
    <property type="match status" value="1"/>
</dbReference>
<reference key="1">
    <citation type="journal article" date="2010" name="J. Proteome Res.">
        <title>Molecular diversification of peptide toxins from the tarantula Haplopelma hainanum (Ornithoctonus hainana) venom based on transcriptomic, peptidomic, and genomic analyses.</title>
        <authorList>
            <person name="Tang X."/>
            <person name="Zhang Y."/>
            <person name="Hu W."/>
            <person name="Xu D."/>
            <person name="Tao H."/>
            <person name="Yang X."/>
            <person name="Li Y."/>
            <person name="Jiang L."/>
            <person name="Liang S."/>
        </authorList>
    </citation>
    <scope>PROTEIN SEQUENCE</scope>
    <scope>MASS SPECTROMETRY</scope>
    <source>
        <tissue>Venom</tissue>
    </source>
</reference>
<accession>P0CH71</accession>